<evidence type="ECO:0000255" key="1">
    <source>
        <dbReference type="HAMAP-Rule" id="MF_03027"/>
    </source>
</evidence>
<evidence type="ECO:0000256" key="2">
    <source>
        <dbReference type="SAM" id="MobiDB-lite"/>
    </source>
</evidence>
<evidence type="ECO:0000305" key="3"/>
<name>BOP1_CHLRE</name>
<organism>
    <name type="scientific">Chlamydomonas reinhardtii</name>
    <name type="common">Chlamydomonas smithii</name>
    <dbReference type="NCBI Taxonomy" id="3055"/>
    <lineage>
        <taxon>Eukaryota</taxon>
        <taxon>Viridiplantae</taxon>
        <taxon>Chlorophyta</taxon>
        <taxon>core chlorophytes</taxon>
        <taxon>Chlorophyceae</taxon>
        <taxon>CS clade</taxon>
        <taxon>Chlamydomonadales</taxon>
        <taxon>Chlamydomonadaceae</taxon>
        <taxon>Chlamydomonas</taxon>
    </lineage>
</organism>
<keyword id="KW-0539">Nucleus</keyword>
<keyword id="KW-0677">Repeat</keyword>
<keyword id="KW-0690">Ribosome biogenesis</keyword>
<keyword id="KW-0698">rRNA processing</keyword>
<keyword id="KW-0853">WD repeat</keyword>
<feature type="chain" id="PRO_0000370413" description="Ribosome biogenesis protein BOP1 homolog">
    <location>
        <begin position="1"/>
        <end position="797"/>
    </location>
</feature>
<feature type="repeat" description="WD 1">
    <location>
        <begin position="462"/>
        <end position="502"/>
    </location>
</feature>
<feature type="repeat" description="WD 2">
    <location>
        <begin position="504"/>
        <end position="544"/>
    </location>
</feature>
<feature type="repeat" description="WD 3">
    <location>
        <begin position="581"/>
        <end position="623"/>
    </location>
</feature>
<feature type="repeat" description="WD 4">
    <location>
        <begin position="626"/>
        <end position="664"/>
    </location>
</feature>
<feature type="repeat" description="WD 5">
    <location>
        <begin position="667"/>
        <end position="706"/>
    </location>
</feature>
<feature type="repeat" description="WD 6">
    <location>
        <begin position="710"/>
        <end position="749"/>
    </location>
</feature>
<feature type="repeat" description="WD 7">
    <location>
        <begin position="766"/>
        <end position="797"/>
    </location>
</feature>
<feature type="region of interest" description="Disordered" evidence="2">
    <location>
        <begin position="22"/>
        <end position="112"/>
    </location>
</feature>
<feature type="region of interest" description="Disordered" evidence="2">
    <location>
        <begin position="149"/>
        <end position="177"/>
    </location>
</feature>
<feature type="compositionally biased region" description="Low complexity" evidence="2">
    <location>
        <begin position="61"/>
        <end position="73"/>
    </location>
</feature>
<feature type="compositionally biased region" description="Acidic residues" evidence="2">
    <location>
        <begin position="74"/>
        <end position="87"/>
    </location>
</feature>
<feature type="compositionally biased region" description="Gly residues" evidence="2">
    <location>
        <begin position="90"/>
        <end position="112"/>
    </location>
</feature>
<dbReference type="EMBL" id="DS496115">
    <property type="protein sequence ID" value="EDP06418.1"/>
    <property type="status" value="ALT_INIT"/>
    <property type="molecule type" value="Genomic_DNA"/>
</dbReference>
<dbReference type="SMR" id="A8ID74"/>
<dbReference type="PaxDb" id="3055-EDP06418"/>
<dbReference type="ProMEX" id="A8ID74"/>
<dbReference type="eggNOG" id="KOG0650">
    <property type="taxonomic scope" value="Eukaryota"/>
</dbReference>
<dbReference type="HOGENOM" id="CLU_011390_2_0_1"/>
<dbReference type="GO" id="GO:0005730">
    <property type="term" value="C:nucleolus"/>
    <property type="evidence" value="ECO:0007669"/>
    <property type="project" value="UniProtKB-SubCell"/>
</dbReference>
<dbReference type="GO" id="GO:0005654">
    <property type="term" value="C:nucleoplasm"/>
    <property type="evidence" value="ECO:0007669"/>
    <property type="project" value="UniProtKB-SubCell"/>
</dbReference>
<dbReference type="GO" id="GO:0030687">
    <property type="term" value="C:preribosome, large subunit precursor"/>
    <property type="evidence" value="ECO:0007669"/>
    <property type="project" value="UniProtKB-UniRule"/>
</dbReference>
<dbReference type="GO" id="GO:0043021">
    <property type="term" value="F:ribonucleoprotein complex binding"/>
    <property type="evidence" value="ECO:0007669"/>
    <property type="project" value="UniProtKB-UniRule"/>
</dbReference>
<dbReference type="GO" id="GO:0000466">
    <property type="term" value="P:maturation of 5.8S rRNA from tricistronic rRNA transcript (SSU-rRNA, 5.8S rRNA, LSU-rRNA)"/>
    <property type="evidence" value="ECO:0007669"/>
    <property type="project" value="UniProtKB-UniRule"/>
</dbReference>
<dbReference type="GO" id="GO:0000463">
    <property type="term" value="P:maturation of LSU-rRNA from tricistronic rRNA transcript (SSU-rRNA, 5.8S rRNA, LSU-rRNA)"/>
    <property type="evidence" value="ECO:0007669"/>
    <property type="project" value="UniProtKB-UniRule"/>
</dbReference>
<dbReference type="FunFam" id="2.130.10.10:FF:000061">
    <property type="entry name" value="Ribosome biogenesis protein BOP1 homolog"/>
    <property type="match status" value="1"/>
</dbReference>
<dbReference type="Gene3D" id="2.130.10.10">
    <property type="entry name" value="YVTN repeat-like/Quinoprotein amine dehydrogenase"/>
    <property type="match status" value="1"/>
</dbReference>
<dbReference type="HAMAP" id="MF_03027">
    <property type="entry name" value="BOP1"/>
    <property type="match status" value="1"/>
</dbReference>
<dbReference type="InterPro" id="IPR028598">
    <property type="entry name" value="BOP1/Erb1"/>
</dbReference>
<dbReference type="InterPro" id="IPR012953">
    <property type="entry name" value="BOP1_N_dom"/>
</dbReference>
<dbReference type="InterPro" id="IPR015943">
    <property type="entry name" value="WD40/YVTN_repeat-like_dom_sf"/>
</dbReference>
<dbReference type="InterPro" id="IPR019775">
    <property type="entry name" value="WD40_repeat_CS"/>
</dbReference>
<dbReference type="InterPro" id="IPR036322">
    <property type="entry name" value="WD40_repeat_dom_sf"/>
</dbReference>
<dbReference type="InterPro" id="IPR001680">
    <property type="entry name" value="WD40_rpt"/>
</dbReference>
<dbReference type="PANTHER" id="PTHR17605:SF0">
    <property type="entry name" value="RIBOSOME BIOGENESIS PROTEIN BOP1"/>
    <property type="match status" value="1"/>
</dbReference>
<dbReference type="PANTHER" id="PTHR17605">
    <property type="entry name" value="RIBOSOME BIOGENESIS PROTEIN BOP1 BLOCK OF PROLIFERATION 1 PROTEIN"/>
    <property type="match status" value="1"/>
</dbReference>
<dbReference type="Pfam" id="PF08145">
    <property type="entry name" value="BOP1NT"/>
    <property type="match status" value="1"/>
</dbReference>
<dbReference type="Pfam" id="PF00400">
    <property type="entry name" value="WD40"/>
    <property type="match status" value="4"/>
</dbReference>
<dbReference type="SMART" id="SM01035">
    <property type="entry name" value="BOP1NT"/>
    <property type="match status" value="1"/>
</dbReference>
<dbReference type="SMART" id="SM00320">
    <property type="entry name" value="WD40"/>
    <property type="match status" value="7"/>
</dbReference>
<dbReference type="SUPFAM" id="SSF50978">
    <property type="entry name" value="WD40 repeat-like"/>
    <property type="match status" value="1"/>
</dbReference>
<dbReference type="PROSITE" id="PS00678">
    <property type="entry name" value="WD_REPEATS_1"/>
    <property type="match status" value="1"/>
</dbReference>
<dbReference type="PROSITE" id="PS50082">
    <property type="entry name" value="WD_REPEATS_2"/>
    <property type="match status" value="1"/>
</dbReference>
<dbReference type="PROSITE" id="PS50294">
    <property type="entry name" value="WD_REPEATS_REGION"/>
    <property type="match status" value="2"/>
</dbReference>
<gene>
    <name type="ORF">CHLREDRAFT_111274</name>
</gene>
<reference key="1">
    <citation type="journal article" date="2007" name="Science">
        <title>The Chlamydomonas genome reveals the evolution of key animal and plant functions.</title>
        <authorList>
            <person name="Merchant S.S."/>
            <person name="Prochnik S.E."/>
            <person name="Vallon O."/>
            <person name="Harris E.H."/>
            <person name="Karpowicz S.J."/>
            <person name="Witman G.B."/>
            <person name="Terry A."/>
            <person name="Salamov A."/>
            <person name="Fritz-Laylin L.K."/>
            <person name="Marechal-Drouard L."/>
            <person name="Marshall W.F."/>
            <person name="Qu L.H."/>
            <person name="Nelson D.R."/>
            <person name="Sanderfoot A.A."/>
            <person name="Spalding M.H."/>
            <person name="Kapitonov V.V."/>
            <person name="Ren Q."/>
            <person name="Ferris P."/>
            <person name="Lindquist E."/>
            <person name="Shapiro H."/>
            <person name="Lucas S.M."/>
            <person name="Grimwood J."/>
            <person name="Schmutz J."/>
            <person name="Cardol P."/>
            <person name="Cerutti H."/>
            <person name="Chanfreau G."/>
            <person name="Chen C.L."/>
            <person name="Cognat V."/>
            <person name="Croft M.T."/>
            <person name="Dent R."/>
            <person name="Dutcher S."/>
            <person name="Fernandez E."/>
            <person name="Fukuzawa H."/>
            <person name="Gonzalez-Ballester D."/>
            <person name="Gonzalez-Halphen D."/>
            <person name="Hallmann A."/>
            <person name="Hanikenne M."/>
            <person name="Hippler M."/>
            <person name="Inwood W."/>
            <person name="Jabbari K."/>
            <person name="Kalanon M."/>
            <person name="Kuras R."/>
            <person name="Lefebvre P.A."/>
            <person name="Lemaire S.D."/>
            <person name="Lobanov A.V."/>
            <person name="Lohr M."/>
            <person name="Manuell A."/>
            <person name="Meier I."/>
            <person name="Mets L."/>
            <person name="Mittag M."/>
            <person name="Mittelmeier T."/>
            <person name="Moroney J.V."/>
            <person name="Moseley J."/>
            <person name="Napoli C."/>
            <person name="Nedelcu A.M."/>
            <person name="Niyogi K."/>
            <person name="Novoselov S.V."/>
            <person name="Paulsen I.T."/>
            <person name="Pazour G.J."/>
            <person name="Purton S."/>
            <person name="Ral J.P."/>
            <person name="Riano-Pachon D.M."/>
            <person name="Riekhof W."/>
            <person name="Rymarquis L."/>
            <person name="Schroda M."/>
            <person name="Stern D."/>
            <person name="Umen J."/>
            <person name="Willows R."/>
            <person name="Wilson N."/>
            <person name="Zimmer S.L."/>
            <person name="Allmer J."/>
            <person name="Balk J."/>
            <person name="Bisova K."/>
            <person name="Chen C.J."/>
            <person name="Elias M."/>
            <person name="Gendler K."/>
            <person name="Hauser C."/>
            <person name="Lamb M.R."/>
            <person name="Ledford H."/>
            <person name="Long J.C."/>
            <person name="Minagawa J."/>
            <person name="Page M.D."/>
            <person name="Pan J."/>
            <person name="Pootakham W."/>
            <person name="Roje S."/>
            <person name="Rose A."/>
            <person name="Stahlberg E."/>
            <person name="Terauchi A.M."/>
            <person name="Yang P."/>
            <person name="Ball S."/>
            <person name="Bowler C."/>
            <person name="Dieckmann C.L."/>
            <person name="Gladyshev V.N."/>
            <person name="Green P."/>
            <person name="Jorgensen R."/>
            <person name="Mayfield S."/>
            <person name="Mueller-Roeber B."/>
            <person name="Rajamani S."/>
            <person name="Sayre R.T."/>
            <person name="Brokstein P."/>
            <person name="Dubchak I."/>
            <person name="Goodstein D."/>
            <person name="Hornick L."/>
            <person name="Huang Y.W."/>
            <person name="Jhaveri J."/>
            <person name="Luo Y."/>
            <person name="Martinez D."/>
            <person name="Ngau W.C."/>
            <person name="Otillar B."/>
            <person name="Poliakov A."/>
            <person name="Porter A."/>
            <person name="Szajkowski L."/>
            <person name="Werner G."/>
            <person name="Zhou K."/>
            <person name="Grigoriev I.V."/>
            <person name="Rokhsar D.S."/>
            <person name="Grossman A.R."/>
        </authorList>
    </citation>
    <scope>NUCLEOTIDE SEQUENCE [LARGE SCALE GENOMIC DNA]</scope>
    <source>
        <strain>CC-503</strain>
        <strain>cw92</strain>
    </source>
</reference>
<protein>
    <recommendedName>
        <fullName evidence="1">Ribosome biogenesis protein BOP1 homolog</fullName>
    </recommendedName>
</protein>
<proteinExistence type="inferred from homology"/>
<comment type="function">
    <text evidence="1">Required for maturation of ribosomal RNAs and formation of the large ribosomal subunit.</text>
</comment>
<comment type="subcellular location">
    <subcellularLocation>
        <location evidence="1">Nucleus</location>
        <location evidence="1">Nucleolus</location>
    </subcellularLocation>
    <subcellularLocation>
        <location evidence="1">Nucleus</location>
        <location evidence="1">Nucleoplasm</location>
    </subcellularLocation>
</comment>
<comment type="similarity">
    <text evidence="1">Belongs to the WD repeat BOP1/ERB1 family.</text>
</comment>
<comment type="sequence caution" evidence="3">
    <conflict type="erroneous initiation">
        <sequence resource="EMBL-CDS" id="EDP06418"/>
    </conflict>
</comment>
<accession>A8ID74</accession>
<sequence>MHIISAIYSARVQNCAAPTQPLVPSCQTHSAASHTPPGPSARLPSPARPEASTRTQGKSHAGAAAAAVEGTAAPEDEAADNSSEEDAGPGSHGEGAGEGGGSGTWPGNGGGPQPIHRCAGSVVAGATRGGCVAATRLYLAAVQPSGGLSICANTKPRAGPDPGSDSSEDERPNRNTVGNVPLVWYKDEEHIGYDIEGARITKAQRKDRLQQLLDRNDSKKALRTIYDPYNDEEVTLSKEELAMVMRIRAGQFPHLEVNPHETEHTWFTDPRDAEVMPIVDRPEPKSRFVPSKWEEQKIVKLVRAIRKGWIKKTPEQEEEERAAGPPAYLLWADDGLTDEAAAKAGSGLTYIPAPKLQLPGHADSYNPPAEYLPTEEEVAAWQMADPEDRPKALPQAFTSLRAVPAYTDFIKERFERCLDLYLCPRVRRKRLDIKSPEQLVPQLPKPRDLQPFPTTLALAYEGHMGPVASIAPDPWTGQWLLSGGQDGTLRLWEVRTGRCWRTWVLEGPVSAVAWCPQAGLRLVSAAVGNCVVLLPSGTGPEEAEEAAAEALRVRGPGRGGGRWVRGGPEEASSSGAGLAVRLRFPVRSLAWHGRGDYFASVAPTGNTQAVVVHQLSKRASQNPFRKNRGRVVRVAFHPTKPFFFVATQNHVRVYNLAKQALAKKLLGGGGVLSCLALHPGGDHVLVGSDDKRVAWYDLDLSTKPYKALRYHSAPPRAVAFHRSYPLFASAADDGTVQVFHGMVYADLLTNPLIVPVKILRGGHTVTASEGVADCAFHPTQPWIFTAGADSKILLYCN</sequence>